<proteinExistence type="inferred from homology"/>
<keyword id="KW-0963">Cytoplasm</keyword>
<keyword id="KW-0378">Hydrolase</keyword>
<keyword id="KW-1185">Reference proteome</keyword>
<keyword id="KW-0694">RNA-binding</keyword>
<keyword id="KW-0820">tRNA-binding</keyword>
<feature type="chain" id="PRO_1000010576" description="Peptidyl-tRNA hydrolase">
    <location>
        <begin position="1"/>
        <end position="181"/>
    </location>
</feature>
<feature type="active site" description="Proton acceptor" evidence="1">
    <location>
        <position position="19"/>
    </location>
</feature>
<feature type="binding site" evidence="1">
    <location>
        <position position="14"/>
    </location>
    <ligand>
        <name>tRNA</name>
        <dbReference type="ChEBI" id="CHEBI:17843"/>
    </ligand>
</feature>
<feature type="binding site" evidence="1">
    <location>
        <position position="60"/>
    </location>
    <ligand>
        <name>tRNA</name>
        <dbReference type="ChEBI" id="CHEBI:17843"/>
    </ligand>
</feature>
<feature type="binding site" evidence="1">
    <location>
        <position position="62"/>
    </location>
    <ligand>
        <name>tRNA</name>
        <dbReference type="ChEBI" id="CHEBI:17843"/>
    </ligand>
</feature>
<feature type="binding site" evidence="1">
    <location>
        <position position="106"/>
    </location>
    <ligand>
        <name>tRNA</name>
        <dbReference type="ChEBI" id="CHEBI:17843"/>
    </ligand>
</feature>
<feature type="site" description="Discriminates between blocked and unblocked aminoacyl-tRNA" evidence="1">
    <location>
        <position position="9"/>
    </location>
</feature>
<feature type="site" description="Stabilizes the basic form of H active site to accept a proton" evidence="1">
    <location>
        <position position="85"/>
    </location>
</feature>
<organism>
    <name type="scientific">Campylobacter curvus (strain 525.92)</name>
    <dbReference type="NCBI Taxonomy" id="360105"/>
    <lineage>
        <taxon>Bacteria</taxon>
        <taxon>Pseudomonadati</taxon>
        <taxon>Campylobacterota</taxon>
        <taxon>Epsilonproteobacteria</taxon>
        <taxon>Campylobacterales</taxon>
        <taxon>Campylobacteraceae</taxon>
        <taxon>Campylobacter</taxon>
    </lineage>
</organism>
<sequence>MTLIVGLGNPTSKYENTRHNIGFMLIDALKNSNFTDVSSSKFQGELFKYSNLLLLKPTTFMNLSGNSVKAVNDFYKPERIIVIHDDLDLPFGAMKFKKGGSSGGHNGIRSIDTLIGNDYERVRIGIGRSGNAANFVLGEFSPEEKEHLAEILEYGTQAVNELIKSDIESVAQKFTIKKGVL</sequence>
<accession>A7H088</accession>
<name>PTH_CAMC5</name>
<comment type="function">
    <text evidence="1">Hydrolyzes ribosome-free peptidyl-tRNAs (with 1 or more amino acids incorporated), which drop off the ribosome during protein synthesis, or as a result of ribosome stalling.</text>
</comment>
<comment type="function">
    <text evidence="1">Catalyzes the release of premature peptidyl moieties from peptidyl-tRNA molecules trapped in stalled 50S ribosomal subunits, and thus maintains levels of free tRNAs and 50S ribosomes.</text>
</comment>
<comment type="catalytic activity">
    <reaction evidence="1">
        <text>an N-acyl-L-alpha-aminoacyl-tRNA + H2O = an N-acyl-L-amino acid + a tRNA + H(+)</text>
        <dbReference type="Rhea" id="RHEA:54448"/>
        <dbReference type="Rhea" id="RHEA-COMP:10123"/>
        <dbReference type="Rhea" id="RHEA-COMP:13883"/>
        <dbReference type="ChEBI" id="CHEBI:15377"/>
        <dbReference type="ChEBI" id="CHEBI:15378"/>
        <dbReference type="ChEBI" id="CHEBI:59874"/>
        <dbReference type="ChEBI" id="CHEBI:78442"/>
        <dbReference type="ChEBI" id="CHEBI:138191"/>
        <dbReference type="EC" id="3.1.1.29"/>
    </reaction>
</comment>
<comment type="subunit">
    <text evidence="1">Monomer.</text>
</comment>
<comment type="subcellular location">
    <subcellularLocation>
        <location evidence="1">Cytoplasm</location>
    </subcellularLocation>
</comment>
<comment type="similarity">
    <text evidence="1">Belongs to the PTH family.</text>
</comment>
<protein>
    <recommendedName>
        <fullName evidence="1">Peptidyl-tRNA hydrolase</fullName>
        <shortName evidence="1">Pth</shortName>
        <ecNumber evidence="1">3.1.1.29</ecNumber>
    </recommendedName>
</protein>
<reference key="1">
    <citation type="submission" date="2007-07" db="EMBL/GenBank/DDBJ databases">
        <title>Genome sequence of Campylobacter curvus 525.92 isolated from human feces.</title>
        <authorList>
            <person name="Fouts D.E."/>
            <person name="Mongodin E.F."/>
            <person name="Puiu D."/>
            <person name="Sebastian Y."/>
            <person name="Miller W.G."/>
            <person name="Mandrell R.E."/>
            <person name="Lastovica A.J."/>
            <person name="Nelson K.E."/>
        </authorList>
    </citation>
    <scope>NUCLEOTIDE SEQUENCE [LARGE SCALE GENOMIC DNA]</scope>
    <source>
        <strain>525.92</strain>
    </source>
</reference>
<dbReference type="EC" id="3.1.1.29" evidence="1"/>
<dbReference type="EMBL" id="CP000767">
    <property type="protein sequence ID" value="EAU01103.1"/>
    <property type="molecule type" value="Genomic_DNA"/>
</dbReference>
<dbReference type="RefSeq" id="WP_009650877.1">
    <property type="nucleotide sequence ID" value="NC_009715.2"/>
</dbReference>
<dbReference type="SMR" id="A7H088"/>
<dbReference type="STRING" id="360105.CCV52592_1663"/>
<dbReference type="KEGG" id="ccv:CCV52592_1663"/>
<dbReference type="HOGENOM" id="CLU_062456_4_1_7"/>
<dbReference type="OrthoDB" id="9800507at2"/>
<dbReference type="Proteomes" id="UP000006380">
    <property type="component" value="Chromosome"/>
</dbReference>
<dbReference type="GO" id="GO:0005737">
    <property type="term" value="C:cytoplasm"/>
    <property type="evidence" value="ECO:0007669"/>
    <property type="project" value="UniProtKB-SubCell"/>
</dbReference>
<dbReference type="GO" id="GO:0004045">
    <property type="term" value="F:peptidyl-tRNA hydrolase activity"/>
    <property type="evidence" value="ECO:0007669"/>
    <property type="project" value="UniProtKB-UniRule"/>
</dbReference>
<dbReference type="GO" id="GO:0000049">
    <property type="term" value="F:tRNA binding"/>
    <property type="evidence" value="ECO:0007669"/>
    <property type="project" value="UniProtKB-UniRule"/>
</dbReference>
<dbReference type="GO" id="GO:0006515">
    <property type="term" value="P:protein quality control for misfolded or incompletely synthesized proteins"/>
    <property type="evidence" value="ECO:0007669"/>
    <property type="project" value="UniProtKB-UniRule"/>
</dbReference>
<dbReference type="GO" id="GO:0072344">
    <property type="term" value="P:rescue of stalled ribosome"/>
    <property type="evidence" value="ECO:0007669"/>
    <property type="project" value="UniProtKB-UniRule"/>
</dbReference>
<dbReference type="CDD" id="cd00462">
    <property type="entry name" value="PTH"/>
    <property type="match status" value="1"/>
</dbReference>
<dbReference type="FunFam" id="3.40.50.1470:FF:000001">
    <property type="entry name" value="Peptidyl-tRNA hydrolase"/>
    <property type="match status" value="1"/>
</dbReference>
<dbReference type="Gene3D" id="3.40.50.1470">
    <property type="entry name" value="Peptidyl-tRNA hydrolase"/>
    <property type="match status" value="1"/>
</dbReference>
<dbReference type="HAMAP" id="MF_00083">
    <property type="entry name" value="Pept_tRNA_hydro_bact"/>
    <property type="match status" value="1"/>
</dbReference>
<dbReference type="InterPro" id="IPR001328">
    <property type="entry name" value="Pept_tRNA_hydro"/>
</dbReference>
<dbReference type="InterPro" id="IPR018171">
    <property type="entry name" value="Pept_tRNA_hydro_CS"/>
</dbReference>
<dbReference type="InterPro" id="IPR036416">
    <property type="entry name" value="Pept_tRNA_hydro_sf"/>
</dbReference>
<dbReference type="NCBIfam" id="TIGR00447">
    <property type="entry name" value="pth"/>
    <property type="match status" value="1"/>
</dbReference>
<dbReference type="PANTHER" id="PTHR17224">
    <property type="entry name" value="PEPTIDYL-TRNA HYDROLASE"/>
    <property type="match status" value="1"/>
</dbReference>
<dbReference type="PANTHER" id="PTHR17224:SF1">
    <property type="entry name" value="PEPTIDYL-TRNA HYDROLASE"/>
    <property type="match status" value="1"/>
</dbReference>
<dbReference type="Pfam" id="PF01195">
    <property type="entry name" value="Pept_tRNA_hydro"/>
    <property type="match status" value="1"/>
</dbReference>
<dbReference type="SUPFAM" id="SSF53178">
    <property type="entry name" value="Peptidyl-tRNA hydrolase-like"/>
    <property type="match status" value="1"/>
</dbReference>
<dbReference type="PROSITE" id="PS01195">
    <property type="entry name" value="PEPT_TRNA_HYDROL_1"/>
    <property type="match status" value="1"/>
</dbReference>
<dbReference type="PROSITE" id="PS01196">
    <property type="entry name" value="PEPT_TRNA_HYDROL_2"/>
    <property type="match status" value="1"/>
</dbReference>
<gene>
    <name evidence="1" type="primary">pth</name>
    <name type="ordered locus">Ccur92_15760</name>
    <name type="ORF">CCV52592_1663</name>
</gene>
<evidence type="ECO:0000255" key="1">
    <source>
        <dbReference type="HAMAP-Rule" id="MF_00083"/>
    </source>
</evidence>